<sequence length="428" mass="46304">MNVLVIGSGGREHTIAWKFAQSEKVERVYVAPGNDGMSDVATCVAISEQDHDQLVAFAKENKIGLTFVGPEVPLLAGIVDRFQEEGLRVFGPSKRAAEIEGSKSYAKQVMKTYNIPTGSYEVFTSFDEAKAYVEAEGVPIVIKADGLAAGKGVVVALTNEEAIAALDDMLNQDKFGGAGARVVIEEYLEGEELSLMAFVHGETVIPMVGAQDHKRAFDGDQGPNTGGMGAYSPVPQFSDVQLKQAVNEILIPTARALMQEERSFTGILYAGLMMTADGPKVIEFNARFGDPETQVVLPRLKSDLVNVIESLLDGQEPELEWDEQAVLGVVLATKGYPGSYEKGYTISGLEQLEDDTLVFHAGTKREEEELVTNGGRVLLVAKQASTLREAQAAVYEELNKVKSDGLFYRKDIGSKAIAERAVSSQTEQ</sequence>
<feature type="chain" id="PRO_0000151435" description="Phosphoribosylamine--glycine ligase">
    <location>
        <begin position="1"/>
        <end position="428"/>
    </location>
</feature>
<feature type="domain" description="ATP-grasp" evidence="2">
    <location>
        <begin position="107"/>
        <end position="313"/>
    </location>
</feature>
<feature type="binding site" evidence="2">
    <location>
        <begin position="133"/>
        <end position="194"/>
    </location>
    <ligand>
        <name>ATP</name>
        <dbReference type="ChEBI" id="CHEBI:30616"/>
    </ligand>
</feature>
<feature type="binding site" evidence="2">
    <location>
        <position position="283"/>
    </location>
    <ligand>
        <name>Mg(2+)</name>
        <dbReference type="ChEBI" id="CHEBI:18420"/>
    </ligand>
</feature>
<feature type="binding site" evidence="2">
    <location>
        <position position="285"/>
    </location>
    <ligand>
        <name>Mg(2+)</name>
        <dbReference type="ChEBI" id="CHEBI:18420"/>
    </ligand>
</feature>
<evidence type="ECO:0000250" key="1"/>
<evidence type="ECO:0000255" key="2">
    <source>
        <dbReference type="HAMAP-Rule" id="MF_00138"/>
    </source>
</evidence>
<reference key="1">
    <citation type="journal article" date="2000" name="Nucleic Acids Res.">
        <title>Complete genome sequence of the alkaliphilic bacterium Bacillus halodurans and genomic sequence comparison with Bacillus subtilis.</title>
        <authorList>
            <person name="Takami H."/>
            <person name="Nakasone K."/>
            <person name="Takaki Y."/>
            <person name="Maeno G."/>
            <person name="Sasaki R."/>
            <person name="Masui N."/>
            <person name="Fuji F."/>
            <person name="Hirama C."/>
            <person name="Nakamura Y."/>
            <person name="Ogasawara N."/>
            <person name="Kuhara S."/>
            <person name="Horikoshi K."/>
        </authorList>
    </citation>
    <scope>NUCLEOTIDE SEQUENCE [LARGE SCALE GENOMIC DNA]</scope>
    <source>
        <strain>ATCC BAA-125 / DSM 18197 / FERM 7344 / JCM 9153 / C-125</strain>
    </source>
</reference>
<accession>Q9KF52</accession>
<comment type="catalytic activity">
    <reaction evidence="2">
        <text>5-phospho-beta-D-ribosylamine + glycine + ATP = N(1)-(5-phospho-beta-D-ribosyl)glycinamide + ADP + phosphate + H(+)</text>
        <dbReference type="Rhea" id="RHEA:17453"/>
        <dbReference type="ChEBI" id="CHEBI:15378"/>
        <dbReference type="ChEBI" id="CHEBI:30616"/>
        <dbReference type="ChEBI" id="CHEBI:43474"/>
        <dbReference type="ChEBI" id="CHEBI:57305"/>
        <dbReference type="ChEBI" id="CHEBI:58681"/>
        <dbReference type="ChEBI" id="CHEBI:143788"/>
        <dbReference type="ChEBI" id="CHEBI:456216"/>
        <dbReference type="EC" id="6.3.4.13"/>
    </reaction>
</comment>
<comment type="cofactor">
    <cofactor evidence="1">
        <name>Mg(2+)</name>
        <dbReference type="ChEBI" id="CHEBI:18420"/>
    </cofactor>
    <cofactor evidence="1">
        <name>Mn(2+)</name>
        <dbReference type="ChEBI" id="CHEBI:29035"/>
    </cofactor>
    <text evidence="1">Binds 1 Mg(2+) or Mn(2+) ion per subunit.</text>
</comment>
<comment type="pathway">
    <text evidence="2">Purine metabolism; IMP biosynthesis via de novo pathway; N(1)-(5-phospho-D-ribosyl)glycinamide from 5-phospho-alpha-D-ribose 1-diphosphate: step 2/2.</text>
</comment>
<comment type="similarity">
    <text evidence="2">Belongs to the GARS family.</text>
</comment>
<dbReference type="EC" id="6.3.4.13" evidence="2"/>
<dbReference type="EMBL" id="BA000004">
    <property type="protein sequence ID" value="BAB04353.1"/>
    <property type="molecule type" value="Genomic_DNA"/>
</dbReference>
<dbReference type="PIR" id="B83729">
    <property type="entry name" value="B83729"/>
</dbReference>
<dbReference type="RefSeq" id="WP_010896810.1">
    <property type="nucleotide sequence ID" value="NC_002570.2"/>
</dbReference>
<dbReference type="SMR" id="Q9KF52"/>
<dbReference type="STRING" id="272558.gene:10726508"/>
<dbReference type="KEGG" id="bha:BH0634"/>
<dbReference type="eggNOG" id="COG0151">
    <property type="taxonomic scope" value="Bacteria"/>
</dbReference>
<dbReference type="HOGENOM" id="CLU_027420_3_1_9"/>
<dbReference type="OrthoDB" id="9807240at2"/>
<dbReference type="UniPathway" id="UPA00074">
    <property type="reaction ID" value="UER00125"/>
</dbReference>
<dbReference type="Proteomes" id="UP000001258">
    <property type="component" value="Chromosome"/>
</dbReference>
<dbReference type="GO" id="GO:0005524">
    <property type="term" value="F:ATP binding"/>
    <property type="evidence" value="ECO:0007669"/>
    <property type="project" value="UniProtKB-KW"/>
</dbReference>
<dbReference type="GO" id="GO:0046872">
    <property type="term" value="F:metal ion binding"/>
    <property type="evidence" value="ECO:0007669"/>
    <property type="project" value="UniProtKB-KW"/>
</dbReference>
<dbReference type="GO" id="GO:0004637">
    <property type="term" value="F:phosphoribosylamine-glycine ligase activity"/>
    <property type="evidence" value="ECO:0007669"/>
    <property type="project" value="UniProtKB-UniRule"/>
</dbReference>
<dbReference type="GO" id="GO:0006189">
    <property type="term" value="P:'de novo' IMP biosynthetic process"/>
    <property type="evidence" value="ECO:0007669"/>
    <property type="project" value="UniProtKB-UniRule"/>
</dbReference>
<dbReference type="GO" id="GO:0009113">
    <property type="term" value="P:purine nucleobase biosynthetic process"/>
    <property type="evidence" value="ECO:0007669"/>
    <property type="project" value="InterPro"/>
</dbReference>
<dbReference type="FunFam" id="3.40.50.20:FF:000006">
    <property type="entry name" value="Phosphoribosylamine--glycine ligase, chloroplastic"/>
    <property type="match status" value="1"/>
</dbReference>
<dbReference type="FunFam" id="3.30.1490.20:FF:000006">
    <property type="entry name" value="phosphoribosylamine--glycine ligase, chloroplastic-like"/>
    <property type="match status" value="1"/>
</dbReference>
<dbReference type="FunFam" id="3.30.470.20:FF:000018">
    <property type="entry name" value="Trifunctional purine biosynthetic protein adenosine-3"/>
    <property type="match status" value="1"/>
</dbReference>
<dbReference type="FunFam" id="3.90.600.10:FF:000001">
    <property type="entry name" value="Trifunctional purine biosynthetic protein adenosine-3"/>
    <property type="match status" value="1"/>
</dbReference>
<dbReference type="Gene3D" id="3.40.50.20">
    <property type="match status" value="1"/>
</dbReference>
<dbReference type="Gene3D" id="3.30.1490.20">
    <property type="entry name" value="ATP-grasp fold, A domain"/>
    <property type="match status" value="1"/>
</dbReference>
<dbReference type="Gene3D" id="3.30.470.20">
    <property type="entry name" value="ATP-grasp fold, B domain"/>
    <property type="match status" value="1"/>
</dbReference>
<dbReference type="Gene3D" id="3.90.600.10">
    <property type="entry name" value="Phosphoribosylglycinamide synthetase, C-terminal domain"/>
    <property type="match status" value="1"/>
</dbReference>
<dbReference type="HAMAP" id="MF_00138">
    <property type="entry name" value="GARS"/>
    <property type="match status" value="1"/>
</dbReference>
<dbReference type="InterPro" id="IPR011761">
    <property type="entry name" value="ATP-grasp"/>
</dbReference>
<dbReference type="InterPro" id="IPR013815">
    <property type="entry name" value="ATP_grasp_subdomain_1"/>
</dbReference>
<dbReference type="InterPro" id="IPR016185">
    <property type="entry name" value="PreATP-grasp_dom_sf"/>
</dbReference>
<dbReference type="InterPro" id="IPR020561">
    <property type="entry name" value="PRibGlycinamid_synth_ATP-grasp"/>
</dbReference>
<dbReference type="InterPro" id="IPR000115">
    <property type="entry name" value="PRibGlycinamide_synth"/>
</dbReference>
<dbReference type="InterPro" id="IPR020560">
    <property type="entry name" value="PRibGlycinamide_synth_C-dom"/>
</dbReference>
<dbReference type="InterPro" id="IPR037123">
    <property type="entry name" value="PRibGlycinamide_synth_C_sf"/>
</dbReference>
<dbReference type="InterPro" id="IPR020559">
    <property type="entry name" value="PRibGlycinamide_synth_CS"/>
</dbReference>
<dbReference type="InterPro" id="IPR020562">
    <property type="entry name" value="PRibGlycinamide_synth_N"/>
</dbReference>
<dbReference type="InterPro" id="IPR011054">
    <property type="entry name" value="Rudment_hybrid_motif"/>
</dbReference>
<dbReference type="NCBIfam" id="TIGR00877">
    <property type="entry name" value="purD"/>
    <property type="match status" value="1"/>
</dbReference>
<dbReference type="PANTHER" id="PTHR43472">
    <property type="entry name" value="PHOSPHORIBOSYLAMINE--GLYCINE LIGASE"/>
    <property type="match status" value="1"/>
</dbReference>
<dbReference type="PANTHER" id="PTHR43472:SF1">
    <property type="entry name" value="PHOSPHORIBOSYLAMINE--GLYCINE LIGASE, CHLOROPLASTIC"/>
    <property type="match status" value="1"/>
</dbReference>
<dbReference type="Pfam" id="PF01071">
    <property type="entry name" value="GARS_A"/>
    <property type="match status" value="1"/>
</dbReference>
<dbReference type="Pfam" id="PF02843">
    <property type="entry name" value="GARS_C"/>
    <property type="match status" value="1"/>
</dbReference>
<dbReference type="Pfam" id="PF02844">
    <property type="entry name" value="GARS_N"/>
    <property type="match status" value="1"/>
</dbReference>
<dbReference type="SMART" id="SM01209">
    <property type="entry name" value="GARS_A"/>
    <property type="match status" value="1"/>
</dbReference>
<dbReference type="SMART" id="SM01210">
    <property type="entry name" value="GARS_C"/>
    <property type="match status" value="1"/>
</dbReference>
<dbReference type="SUPFAM" id="SSF56059">
    <property type="entry name" value="Glutathione synthetase ATP-binding domain-like"/>
    <property type="match status" value="1"/>
</dbReference>
<dbReference type="SUPFAM" id="SSF52440">
    <property type="entry name" value="PreATP-grasp domain"/>
    <property type="match status" value="1"/>
</dbReference>
<dbReference type="SUPFAM" id="SSF51246">
    <property type="entry name" value="Rudiment single hybrid motif"/>
    <property type="match status" value="1"/>
</dbReference>
<dbReference type="PROSITE" id="PS50975">
    <property type="entry name" value="ATP_GRASP"/>
    <property type="match status" value="1"/>
</dbReference>
<dbReference type="PROSITE" id="PS00184">
    <property type="entry name" value="GARS"/>
    <property type="match status" value="1"/>
</dbReference>
<keyword id="KW-0067">ATP-binding</keyword>
<keyword id="KW-0436">Ligase</keyword>
<keyword id="KW-0460">Magnesium</keyword>
<keyword id="KW-0464">Manganese</keyword>
<keyword id="KW-0479">Metal-binding</keyword>
<keyword id="KW-0547">Nucleotide-binding</keyword>
<keyword id="KW-0658">Purine biosynthesis</keyword>
<keyword id="KW-1185">Reference proteome</keyword>
<proteinExistence type="inferred from homology"/>
<organism>
    <name type="scientific">Halalkalibacterium halodurans (strain ATCC BAA-125 / DSM 18197 / FERM 7344 / JCM 9153 / C-125)</name>
    <name type="common">Bacillus halodurans</name>
    <dbReference type="NCBI Taxonomy" id="272558"/>
    <lineage>
        <taxon>Bacteria</taxon>
        <taxon>Bacillati</taxon>
        <taxon>Bacillota</taxon>
        <taxon>Bacilli</taxon>
        <taxon>Bacillales</taxon>
        <taxon>Bacillaceae</taxon>
        <taxon>Halalkalibacterium (ex Joshi et al. 2022)</taxon>
    </lineage>
</organism>
<gene>
    <name evidence="2" type="primary">purD</name>
    <name type="ordered locus">BH0634</name>
</gene>
<protein>
    <recommendedName>
        <fullName evidence="2">Phosphoribosylamine--glycine ligase</fullName>
        <ecNumber evidence="2">6.3.4.13</ecNumber>
    </recommendedName>
    <alternativeName>
        <fullName evidence="2">GARS</fullName>
    </alternativeName>
    <alternativeName>
        <fullName evidence="2">Glycinamide ribonucleotide synthetase</fullName>
    </alternativeName>
    <alternativeName>
        <fullName evidence="2">Phosphoribosylglycinamide synthetase</fullName>
    </alternativeName>
</protein>
<name>PUR2_HALH5</name>